<proteinExistence type="evidence at protein level"/>
<sequence length="570" mass="62809">MQGPLYIGFDLSTQQLKGLVVNSDLKVVYVSKFDFDADSRGFPIKKGVLTNEAEHEVFAPVALWLQALDGVLEGLRKQGMDFSQIKGISGAGQQHGSVYWGENAEKLLKELDASKTLEEQLDGAFSHPFSPNWQDSSTQKECDEFDAALGGQSELAFATGSKAHHRFTGPQIMRFQRKYPDVYKKTSRISLVSSFIASLFLGHIAPMDISDVCGMNLWNIKKGAYDEKLLQLCAGSSGVDDLKRKLGDVPEDGGIHLGPIDRYYVERYGFSPDCTIIPATGDNPATILALPLRASDAMVSLGTSTTFLMSTPSYKPDPATHFFNHPTTAGLYMFMLCYKNGGLARELVRDAVNEKLGEKPSTSWANFDKVTLETPPMGQKADSDPMKLGLFFPRPEIVPNLRSGQWRFDYNPKDGSLQPSNGGWDEPFDEARAIVESQMLSLRLRSRGLTQSPGEGIPAQPRRVYLVGGGSKNKAIAKVAGEILGGSEGVYKLEIGDNACALGAAYKAVWAMERAEGQTFEDLIGKRWHEEEFIEKIADGYQPGVFERYGQAVEGFEKMELEVLRQEGKH</sequence>
<accession>Q8X167</accession>
<reference key="1">
    <citation type="journal article" date="2001" name="Eur. J. Biochem.">
        <title>The Aspergillus niger D-xylulose kinase gene is co-expressed with genes encoding arabinan degrading enzymes, and is essential for growth on D-xylose and L-arabinose.</title>
        <authorList>
            <person name="vanKuyk P.A."/>
            <person name="de Groot M.J."/>
            <person name="Ruijter G.J."/>
            <person name="de Vries R.P."/>
            <person name="Visser J."/>
        </authorList>
    </citation>
    <scope>NUCLEOTIDE SEQUENCE [GENOMIC DNA]</scope>
    <scope>INDUCTION</scope>
    <scope>FUNCTION</scope>
    <scope>BIOPHYSICOCHEMICAL PROPERTIES</scope>
    <source>
        <strain>ATCC 9029 / NRRL 3 / CBS 120.49 / DSM 2466 / N400 / FGSC 732</strain>
    </source>
</reference>
<comment type="function">
    <text evidence="2">Highly specific D-xylulose kinase which participates in the catabolism of xylose. Xylose is a major component of hemicelluloses such as xylan. Most fungi utilize D-xylose via three enzymatic reactions, xylose reductase (XR), xylitol dehydrogenase (XDH), and xylulokinase, to form xylulose 5-phosphate, which enters pentose phosphate pathway.</text>
</comment>
<comment type="catalytic activity">
    <reaction>
        <text>D-xylulose + ATP = D-xylulose 5-phosphate + ADP + H(+)</text>
        <dbReference type="Rhea" id="RHEA:10964"/>
        <dbReference type="ChEBI" id="CHEBI:15378"/>
        <dbReference type="ChEBI" id="CHEBI:17140"/>
        <dbReference type="ChEBI" id="CHEBI:30616"/>
        <dbReference type="ChEBI" id="CHEBI:57737"/>
        <dbReference type="ChEBI" id="CHEBI:456216"/>
        <dbReference type="EC" id="2.7.1.17"/>
    </reaction>
</comment>
<comment type="biophysicochemical properties">
    <kinetics>
        <KM evidence="2">0.76 mM for D-xylulose</KM>
        <KM evidence="2">0.061 mM for ATP</KM>
    </kinetics>
</comment>
<comment type="subcellular location">
    <subcellularLocation>
        <location evidence="1">Cytoplasm</location>
    </subcellularLocation>
</comment>
<comment type="induction">
    <text evidence="2">By D-xylose, L-arabinose or L-arabitol.</text>
</comment>
<comment type="similarity">
    <text evidence="3">Belongs to the FGGY kinase family.</text>
</comment>
<feature type="chain" id="PRO_0000393521" description="D-xylulose kinase A">
    <location>
        <begin position="1"/>
        <end position="570"/>
    </location>
</feature>
<feature type="binding site" evidence="1">
    <location>
        <position position="95"/>
    </location>
    <ligand>
        <name>substrate</name>
    </ligand>
</feature>
<feature type="binding site" evidence="1">
    <location>
        <position position="166"/>
    </location>
    <ligand>
        <name>substrate</name>
    </ligand>
</feature>
<feature type="binding site" evidence="1">
    <location>
        <position position="282"/>
    </location>
    <ligand>
        <name>substrate</name>
    </ligand>
</feature>
<feature type="binding site" evidence="1">
    <location>
        <position position="283"/>
    </location>
    <ligand>
        <name>substrate</name>
    </ligand>
</feature>
<feature type="binding site" evidence="1">
    <location>
        <position position="364"/>
    </location>
    <ligand>
        <name>ATP</name>
        <dbReference type="ChEBI" id="CHEBI:30616"/>
    </ligand>
</feature>
<feature type="binding site" evidence="1">
    <location>
        <begin position="469"/>
        <end position="470"/>
    </location>
    <ligand>
        <name>ATP</name>
        <dbReference type="ChEBI" id="CHEBI:30616"/>
    </ligand>
</feature>
<feature type="binding site" evidence="1">
    <location>
        <position position="473"/>
    </location>
    <ligand>
        <name>ATP</name>
        <dbReference type="ChEBI" id="CHEBI:30616"/>
    </ligand>
</feature>
<name>XKS1_ASPNG</name>
<gene>
    <name type="primary">xkiA</name>
</gene>
<organism>
    <name type="scientific">Aspergillus niger</name>
    <dbReference type="NCBI Taxonomy" id="5061"/>
    <lineage>
        <taxon>Eukaryota</taxon>
        <taxon>Fungi</taxon>
        <taxon>Dikarya</taxon>
        <taxon>Ascomycota</taxon>
        <taxon>Pezizomycotina</taxon>
        <taxon>Eurotiomycetes</taxon>
        <taxon>Eurotiomycetidae</taxon>
        <taxon>Eurotiales</taxon>
        <taxon>Aspergillaceae</taxon>
        <taxon>Aspergillus</taxon>
        <taxon>Aspergillus subgen. Circumdati</taxon>
    </lineage>
</organism>
<evidence type="ECO:0000250" key="1"/>
<evidence type="ECO:0000269" key="2">
    <source>
    </source>
</evidence>
<evidence type="ECO:0000305" key="3"/>
<keyword id="KW-0067">ATP-binding</keyword>
<keyword id="KW-0119">Carbohydrate metabolism</keyword>
<keyword id="KW-0963">Cytoplasm</keyword>
<keyword id="KW-0418">Kinase</keyword>
<keyword id="KW-0547">Nucleotide-binding</keyword>
<keyword id="KW-0808">Transferase</keyword>
<keyword id="KW-0859">Xylose metabolism</keyword>
<protein>
    <recommendedName>
        <fullName>D-xylulose kinase A</fullName>
        <shortName>Xylulokinase A</shortName>
        <ecNumber>2.7.1.17</ecNumber>
    </recommendedName>
</protein>
<dbReference type="EC" id="2.7.1.17"/>
<dbReference type="EMBL" id="AJ305311">
    <property type="protein sequence ID" value="CAC83746.1"/>
    <property type="molecule type" value="Genomic_DNA"/>
</dbReference>
<dbReference type="SMR" id="Q8X167"/>
<dbReference type="PaxDb" id="5061-CADANGAP00005475"/>
<dbReference type="VEuPathDB" id="FungiDB:An07g03140"/>
<dbReference type="VEuPathDB" id="FungiDB:ASPNIDRAFT2_1120560"/>
<dbReference type="VEuPathDB" id="FungiDB:ATCC64974_45440"/>
<dbReference type="VEuPathDB" id="FungiDB:M747DRAFT_334296"/>
<dbReference type="eggNOG" id="KOG2531">
    <property type="taxonomic scope" value="Eukaryota"/>
</dbReference>
<dbReference type="OrthoDB" id="1728974at2759"/>
<dbReference type="BioCyc" id="MetaCyc:MONOMER-13191"/>
<dbReference type="SABIO-RK" id="Q8X167"/>
<dbReference type="GO" id="GO:0005829">
    <property type="term" value="C:cytosol"/>
    <property type="evidence" value="ECO:0007669"/>
    <property type="project" value="TreeGrafter"/>
</dbReference>
<dbReference type="GO" id="GO:0005524">
    <property type="term" value="F:ATP binding"/>
    <property type="evidence" value="ECO:0007669"/>
    <property type="project" value="UniProtKB-KW"/>
</dbReference>
<dbReference type="GO" id="GO:0004856">
    <property type="term" value="F:D-xylulokinase activity"/>
    <property type="evidence" value="ECO:0007669"/>
    <property type="project" value="UniProtKB-EC"/>
</dbReference>
<dbReference type="GO" id="GO:0042732">
    <property type="term" value="P:D-xylose metabolic process"/>
    <property type="evidence" value="ECO:0007669"/>
    <property type="project" value="UniProtKB-KW"/>
</dbReference>
<dbReference type="GO" id="GO:0005997">
    <property type="term" value="P:xylulose metabolic process"/>
    <property type="evidence" value="ECO:0007669"/>
    <property type="project" value="TreeGrafter"/>
</dbReference>
<dbReference type="CDD" id="cd07776">
    <property type="entry name" value="ASKHA_NBD_FGGY_SpXK-like"/>
    <property type="match status" value="1"/>
</dbReference>
<dbReference type="FunFam" id="3.30.420.40:FF:000118">
    <property type="entry name" value="Xylulose kinase 2"/>
    <property type="match status" value="1"/>
</dbReference>
<dbReference type="Gene3D" id="3.30.420.40">
    <property type="match status" value="2"/>
</dbReference>
<dbReference type="InterPro" id="IPR043129">
    <property type="entry name" value="ATPase_NBD"/>
</dbReference>
<dbReference type="InterPro" id="IPR042024">
    <property type="entry name" value="D-XK_euk"/>
</dbReference>
<dbReference type="InterPro" id="IPR018485">
    <property type="entry name" value="FGGY_C"/>
</dbReference>
<dbReference type="InterPro" id="IPR018484">
    <property type="entry name" value="FGGY_N"/>
</dbReference>
<dbReference type="PANTHER" id="PTHR10196">
    <property type="entry name" value="SUGAR KINASE"/>
    <property type="match status" value="1"/>
</dbReference>
<dbReference type="PANTHER" id="PTHR10196:SF57">
    <property type="entry name" value="XYLULOSE KINASE"/>
    <property type="match status" value="1"/>
</dbReference>
<dbReference type="Pfam" id="PF02782">
    <property type="entry name" value="FGGY_C"/>
    <property type="match status" value="1"/>
</dbReference>
<dbReference type="Pfam" id="PF00370">
    <property type="entry name" value="FGGY_N"/>
    <property type="match status" value="1"/>
</dbReference>
<dbReference type="SUPFAM" id="SSF53067">
    <property type="entry name" value="Actin-like ATPase domain"/>
    <property type="match status" value="2"/>
</dbReference>